<comment type="function">
    <text evidence="1">Component of the post-replicative DNA mismatch repair system (MMR). Heterodimerizes with MSH2 to form MutS beta, which binds to DNA mismatches thereby initiating DNA repair. MSH3 provides substrate-binding and substrate specificity to the complex. When bound, the MutS beta heterodimer bends the DNA helix and shields approximately 20 base pairs. Acts mainly to repair insertion-deletion loops (IDLs) from 2 to 13 nucleotides in size, but can also repair base-base and single insertion-deletion mismatches that occur during replication. After mismatch binding, forms a ternary complex with the MutL alpha heterodimer, which is thought to be responsible for directing the downstream MMR events, including strand discrimination, excision, and resynthesis. ATP binding and hydrolysis play a pivotal role in mismatch repair functions (By similarity).</text>
</comment>
<comment type="subunit">
    <text evidence="1">Heterodimer consisting of MSH2-MSH3 (MutS beta). Forms a ternary complex with MutL alpha (MLH1-PMS1) (By similarity).</text>
</comment>
<comment type="subcellular location">
    <subcellularLocation>
        <location evidence="1">Nucleus</location>
    </subcellularLocation>
</comment>
<comment type="similarity">
    <text evidence="4">Belongs to the DNA mismatch repair MutS family. MSH3 subfamily.</text>
</comment>
<protein>
    <recommendedName>
        <fullName>DNA mismatch repair protein MSH3</fullName>
    </recommendedName>
    <alternativeName>
        <fullName>MutS protein homolog 3</fullName>
    </alternativeName>
</protein>
<name>MSH3_CHAGB</name>
<keyword id="KW-0067">ATP-binding</keyword>
<keyword id="KW-0227">DNA damage</keyword>
<keyword id="KW-0234">DNA repair</keyword>
<keyword id="KW-0238">DNA-binding</keyword>
<keyword id="KW-0547">Nucleotide-binding</keyword>
<keyword id="KW-0539">Nucleus</keyword>
<keyword id="KW-1185">Reference proteome</keyword>
<feature type="chain" id="PRO_0000338517" description="DNA mismatch repair protein MSH3">
    <location>
        <begin position="1"/>
        <end position="1156"/>
    </location>
</feature>
<feature type="region of interest" description="Disordered" evidence="3">
    <location>
        <begin position="22"/>
        <end position="163"/>
    </location>
</feature>
<feature type="region of interest" description="Disordered" evidence="3">
    <location>
        <begin position="188"/>
        <end position="225"/>
    </location>
</feature>
<feature type="region of interest" description="Mispair-binding domain" evidence="1">
    <location>
        <begin position="225"/>
        <end position="345"/>
    </location>
</feature>
<feature type="region of interest" description="Disordered" evidence="3">
    <location>
        <begin position="1125"/>
        <end position="1156"/>
    </location>
</feature>
<feature type="compositionally biased region" description="Low complexity" evidence="3">
    <location>
        <begin position="82"/>
        <end position="91"/>
    </location>
</feature>
<feature type="compositionally biased region" description="Basic and acidic residues" evidence="3">
    <location>
        <begin position="132"/>
        <end position="144"/>
    </location>
</feature>
<feature type="compositionally biased region" description="Acidic residues" evidence="3">
    <location>
        <begin position="198"/>
        <end position="212"/>
    </location>
</feature>
<feature type="compositionally biased region" description="Gly residues" evidence="3">
    <location>
        <begin position="1126"/>
        <end position="1137"/>
    </location>
</feature>
<feature type="binding site" evidence="2">
    <location>
        <begin position="903"/>
        <end position="910"/>
    </location>
    <ligand>
        <name>ATP</name>
        <dbReference type="ChEBI" id="CHEBI:30616"/>
    </ligand>
</feature>
<proteinExistence type="inferred from homology"/>
<dbReference type="EMBL" id="CH408029">
    <property type="protein sequence ID" value="EAQ92835.1"/>
    <property type="molecule type" value="Genomic_DNA"/>
</dbReference>
<dbReference type="RefSeq" id="XP_001220291.1">
    <property type="nucleotide sequence ID" value="XM_001220290.1"/>
</dbReference>
<dbReference type="SMR" id="Q2HFD4"/>
<dbReference type="FunCoup" id="Q2HFD4">
    <property type="interactions" value="675"/>
</dbReference>
<dbReference type="STRING" id="306901.Q2HFD4"/>
<dbReference type="GeneID" id="4386506"/>
<dbReference type="VEuPathDB" id="FungiDB:CHGG_01070"/>
<dbReference type="eggNOG" id="KOG0218">
    <property type="taxonomic scope" value="Eukaryota"/>
</dbReference>
<dbReference type="HOGENOM" id="CLU_002472_0_0_1"/>
<dbReference type="InParanoid" id="Q2HFD4"/>
<dbReference type="OMA" id="INMHAAR"/>
<dbReference type="OrthoDB" id="121051at2759"/>
<dbReference type="Proteomes" id="UP000001056">
    <property type="component" value="Unassembled WGS sequence"/>
</dbReference>
<dbReference type="GO" id="GO:0005634">
    <property type="term" value="C:nucleus"/>
    <property type="evidence" value="ECO:0007669"/>
    <property type="project" value="UniProtKB-SubCell"/>
</dbReference>
<dbReference type="GO" id="GO:0005524">
    <property type="term" value="F:ATP binding"/>
    <property type="evidence" value="ECO:0007669"/>
    <property type="project" value="UniProtKB-KW"/>
</dbReference>
<dbReference type="GO" id="GO:0140664">
    <property type="term" value="F:ATP-dependent DNA damage sensor activity"/>
    <property type="evidence" value="ECO:0007669"/>
    <property type="project" value="InterPro"/>
</dbReference>
<dbReference type="GO" id="GO:0030983">
    <property type="term" value="F:mismatched DNA binding"/>
    <property type="evidence" value="ECO:0007669"/>
    <property type="project" value="InterPro"/>
</dbReference>
<dbReference type="GO" id="GO:0006298">
    <property type="term" value="P:mismatch repair"/>
    <property type="evidence" value="ECO:0007669"/>
    <property type="project" value="InterPro"/>
</dbReference>
<dbReference type="GO" id="GO:0006312">
    <property type="term" value="P:mitotic recombination"/>
    <property type="evidence" value="ECO:0007669"/>
    <property type="project" value="TreeGrafter"/>
</dbReference>
<dbReference type="FunFam" id="3.30.420.110:FF:000008">
    <property type="entry name" value="DNA mismatch repair protein"/>
    <property type="match status" value="1"/>
</dbReference>
<dbReference type="FunFam" id="3.40.1170.10:FF:000006">
    <property type="entry name" value="DNA mismatch repair protein"/>
    <property type="match status" value="1"/>
</dbReference>
<dbReference type="FunFam" id="1.10.1420.10:FF:000004">
    <property type="entry name" value="DNA mismatch repair protein Msh3"/>
    <property type="match status" value="1"/>
</dbReference>
<dbReference type="Gene3D" id="1.10.1420.10">
    <property type="match status" value="2"/>
</dbReference>
<dbReference type="Gene3D" id="3.40.1170.10">
    <property type="entry name" value="DNA repair protein MutS, domain I"/>
    <property type="match status" value="1"/>
</dbReference>
<dbReference type="Gene3D" id="3.30.420.110">
    <property type="entry name" value="MutS, connector domain"/>
    <property type="match status" value="1"/>
</dbReference>
<dbReference type="Gene3D" id="3.40.50.300">
    <property type="entry name" value="P-loop containing nucleotide triphosphate hydrolases"/>
    <property type="match status" value="1"/>
</dbReference>
<dbReference type="InterPro" id="IPR007695">
    <property type="entry name" value="DNA_mismatch_repair_MutS-lik_N"/>
</dbReference>
<dbReference type="InterPro" id="IPR017261">
    <property type="entry name" value="DNA_mismatch_repair_MutS/MSH"/>
</dbReference>
<dbReference type="InterPro" id="IPR000432">
    <property type="entry name" value="DNA_mismatch_repair_MutS_C"/>
</dbReference>
<dbReference type="InterPro" id="IPR007696">
    <property type="entry name" value="DNA_mismatch_repair_MutS_core"/>
</dbReference>
<dbReference type="InterPro" id="IPR016151">
    <property type="entry name" value="DNA_mismatch_repair_MutS_N"/>
</dbReference>
<dbReference type="InterPro" id="IPR036187">
    <property type="entry name" value="DNA_mismatch_repair_MutS_sf"/>
</dbReference>
<dbReference type="InterPro" id="IPR007860">
    <property type="entry name" value="DNA_mmatch_repair_MutS_con_dom"/>
</dbReference>
<dbReference type="InterPro" id="IPR045076">
    <property type="entry name" value="MutS"/>
</dbReference>
<dbReference type="InterPro" id="IPR036678">
    <property type="entry name" value="MutS_con_dom_sf"/>
</dbReference>
<dbReference type="InterPro" id="IPR027417">
    <property type="entry name" value="P-loop_NTPase"/>
</dbReference>
<dbReference type="NCBIfam" id="NF003810">
    <property type="entry name" value="PRK05399.1"/>
    <property type="match status" value="1"/>
</dbReference>
<dbReference type="PANTHER" id="PTHR11361:SF122">
    <property type="entry name" value="DNA MISMATCH REPAIR PROTEIN MSH3"/>
    <property type="match status" value="1"/>
</dbReference>
<dbReference type="PANTHER" id="PTHR11361">
    <property type="entry name" value="DNA MISMATCH REPAIR PROTEIN MUTS FAMILY MEMBER"/>
    <property type="match status" value="1"/>
</dbReference>
<dbReference type="Pfam" id="PF01624">
    <property type="entry name" value="MutS_I"/>
    <property type="match status" value="1"/>
</dbReference>
<dbReference type="Pfam" id="PF05188">
    <property type="entry name" value="MutS_II"/>
    <property type="match status" value="1"/>
</dbReference>
<dbReference type="Pfam" id="PF05192">
    <property type="entry name" value="MutS_III"/>
    <property type="match status" value="1"/>
</dbReference>
<dbReference type="Pfam" id="PF00488">
    <property type="entry name" value="MutS_V"/>
    <property type="match status" value="1"/>
</dbReference>
<dbReference type="PIRSF" id="PIRSF037677">
    <property type="entry name" value="DNA_mis_repair_Msh6"/>
    <property type="match status" value="1"/>
</dbReference>
<dbReference type="SMART" id="SM00534">
    <property type="entry name" value="MUTSac"/>
    <property type="match status" value="1"/>
</dbReference>
<dbReference type="SMART" id="SM00533">
    <property type="entry name" value="MUTSd"/>
    <property type="match status" value="1"/>
</dbReference>
<dbReference type="SUPFAM" id="SSF55271">
    <property type="entry name" value="DNA repair protein MutS, domain I"/>
    <property type="match status" value="1"/>
</dbReference>
<dbReference type="SUPFAM" id="SSF48334">
    <property type="entry name" value="DNA repair protein MutS, domain III"/>
    <property type="match status" value="1"/>
</dbReference>
<dbReference type="SUPFAM" id="SSF52540">
    <property type="entry name" value="P-loop containing nucleoside triphosphate hydrolases"/>
    <property type="match status" value="1"/>
</dbReference>
<dbReference type="PROSITE" id="PS00486">
    <property type="entry name" value="DNA_MISMATCH_REPAIR_2"/>
    <property type="match status" value="1"/>
</dbReference>
<organism>
    <name type="scientific">Chaetomium globosum (strain ATCC 6205 / CBS 148.51 / DSM 1962 / NBRC 6347 / NRRL 1970)</name>
    <name type="common">Soil fungus</name>
    <dbReference type="NCBI Taxonomy" id="306901"/>
    <lineage>
        <taxon>Eukaryota</taxon>
        <taxon>Fungi</taxon>
        <taxon>Dikarya</taxon>
        <taxon>Ascomycota</taxon>
        <taxon>Pezizomycotina</taxon>
        <taxon>Sordariomycetes</taxon>
        <taxon>Sordariomycetidae</taxon>
        <taxon>Sordariales</taxon>
        <taxon>Chaetomiaceae</taxon>
        <taxon>Chaetomium</taxon>
    </lineage>
</organism>
<accession>Q2HFD4</accession>
<evidence type="ECO:0000250" key="1"/>
<evidence type="ECO:0000255" key="2"/>
<evidence type="ECO:0000256" key="3">
    <source>
        <dbReference type="SAM" id="MobiDB-lite"/>
    </source>
</evidence>
<evidence type="ECO:0000305" key="4"/>
<sequence>MAGPSRAPVKKQASLTSFFTANISSKKHANSPGGGSAANRNKDETEDENTQKIIGKGKEKDESSPITLSVLESNRKRPLQDNNSNGNGRSSRAAKRAKSVVSEDDSEEVSSPPVQASTGRTPIPEPPSSSSRTERYAYDADRLASDPSGLNEDEDAATRRKKEELHRKFVKKLGHPDSLASLRRRELLGQNESPGLDGEGEEEGGDAEEDETPLPSKTKKKGAKTGKLTPMEIQFLDIKRKHMDTVLVVEVGYKFRFFGEDARIAAKELSIVCIPGKFRYDEPHIDRFASASIPVHRLSVHVKRLVAAGHKVGVVRQLETAALKKAGDNRNAPFVRKLTNIYTKGTYIDETGELDQPGEGAGASAGGYLLCLTESPVKGLGTDENVHIGVMAVQPATGDIIYDDFEDGFMRREIETRLLHISPCELLVVGELSKATNKLVQHLAGSSTNVFGDRSRVERVPKSKTMAAEASSHVTQFYAGKVKGDDERSASLLDKVLKLPESVTVCLSAMITHLTEYGLEHIFDLTKYFQSFTTRQHMLINGTTLESLEVYRNATDQSEKGSLLWALDKTRTRPGRRLLRKWIGRPLLDRERLEERVTAVEELLEHQSNFKVDRLGGVLNSIKADLERSLIRIYYGKCTRPELLSTLQTLQRISIEFSRVKTPEDTGFNSSLIVEAIYALPGIGTIVSAYLDKINPEAARKDDKYTFFRDDEETEDITNHKLGIAAVEADLDVHRKDAATKLSKKTPVTYVTVSGIEYLIEVPNTDLKHVPASWAKISGTKKLSRFHTPEVMRLMNERDQHKEALAAACDNAFTDLLKSIASEYQPLRDAVASLATLDCLLSLAQVASLPGYSKPTFLPTATPPTISITSGRHPIAEHTLPDGYIPFTTSLASPSPLAQLITGPNMGGKSSYVRAVALLVLLAQIGSYVPAEAMSLTLTDAIYTRMGARDNLFAGESTFMVEVSETAAILRGATARSLVVLDELGRGTSTHDGAAIAHAVLAHVARETRCLTLFITHYQNLARVADGLGGAVRCVHMRFEATGRQRDEAADGDADAAAADADEEITFLYEVADGVAHRSYGLNVARLARIPRRVLDVAARKSREMEEGVKARRLRGAVRLLEDVVAGGGGGGGGGGGDGDDGEDPLEHLVSSIEQL</sequence>
<gene>
    <name type="primary">MSH3</name>
    <name type="ORF">CHGG_01070</name>
</gene>
<reference key="1">
    <citation type="journal article" date="2015" name="Genome Announc.">
        <title>Draft genome sequence of the cellulolytic fungus Chaetomium globosum.</title>
        <authorList>
            <person name="Cuomo C.A."/>
            <person name="Untereiner W.A."/>
            <person name="Ma L.-J."/>
            <person name="Grabherr M."/>
            <person name="Birren B.W."/>
        </authorList>
    </citation>
    <scope>NUCLEOTIDE SEQUENCE [LARGE SCALE GENOMIC DNA]</scope>
    <source>
        <strain>ATCC 6205 / CBS 148.51 / DSM 1962 / NBRC 6347 / NRRL 1970</strain>
    </source>
</reference>